<protein>
    <recommendedName>
        <fullName>Putative gustatory receptor 85a</fullName>
    </recommendedName>
</protein>
<sequence length="397" mass="46080">MYSLIEAQLLGGKLVNRVMASLRRIIQRSLGYFCALNGILDFNTDIGTGNLRRYRVLFMYRLLHNFAVISLTLKFLFDFTDHFKYIESSTLITVNFFTYFTLVFFALLSSMGSCYQWQNRILAVLKELKHQRDLSRHMGYRVPRSKQNSIDYLLFALTVLLILRLSIHLATFTLSARMGFNHPCNCFLPECMIFSMNYLLFAILAEITRCWWSLQSGLKMVLLNRQLSTVAFNLWEIERLHTRFQCLIDLTSEVCSIFRYVTLAYMARNLWSGIVAGYLLVRFVIGNGLQDVELVYLVFSFITCIQPLMLSLLVNSMTSTTGSLVEVTRDILKISHKKSVNLERSIEWLSLQLTWQHTHVTIFGVFRINRSLAFRSASLILVHVLYMVQSDYISITN</sequence>
<evidence type="ECO:0000250" key="1"/>
<evidence type="ECO:0000255" key="2"/>
<evidence type="ECO:0000269" key="3">
    <source>
    </source>
</evidence>
<evidence type="ECO:0000305" key="4"/>
<evidence type="ECO:0000312" key="5">
    <source>
        <dbReference type="EMBL" id="AAN13447.1"/>
    </source>
</evidence>
<accession>Q8INM9</accession>
<name>GR85A_DROME</name>
<feature type="chain" id="PRO_0000216538" description="Putative gustatory receptor 85a">
    <location>
        <begin position="1"/>
        <end position="397"/>
    </location>
</feature>
<feature type="topological domain" description="Cytoplasmic" evidence="1">
    <location>
        <begin position="1"/>
        <end position="56"/>
    </location>
</feature>
<feature type="transmembrane region" description="Helical; Name=1" evidence="2">
    <location>
        <begin position="57"/>
        <end position="77"/>
    </location>
</feature>
<feature type="topological domain" description="Extracellular" evidence="1">
    <location>
        <begin position="78"/>
        <end position="90"/>
    </location>
</feature>
<feature type="transmembrane region" description="Helical; Name=2" evidence="2">
    <location>
        <begin position="91"/>
        <end position="111"/>
    </location>
</feature>
<feature type="topological domain" description="Cytoplasmic" evidence="1">
    <location>
        <begin position="112"/>
        <end position="151"/>
    </location>
</feature>
<feature type="transmembrane region" description="Helical; Name=3" evidence="2">
    <location>
        <begin position="152"/>
        <end position="172"/>
    </location>
</feature>
<feature type="topological domain" description="Extracellular" evidence="1">
    <location>
        <begin position="173"/>
        <end position="186"/>
    </location>
</feature>
<feature type="transmembrane region" description="Helical; Name=4" evidence="2">
    <location>
        <begin position="187"/>
        <end position="207"/>
    </location>
</feature>
<feature type="topological domain" description="Cytoplasmic" evidence="1">
    <location>
        <begin position="208"/>
        <end position="268"/>
    </location>
</feature>
<feature type="transmembrane region" description="Helical; Name=5" evidence="2">
    <location>
        <begin position="269"/>
        <end position="289"/>
    </location>
</feature>
<feature type="topological domain" description="Extracellular" evidence="1">
    <location>
        <begin position="290"/>
        <end position="293"/>
    </location>
</feature>
<feature type="transmembrane region" description="Helical; Name=6" evidence="2">
    <location>
        <begin position="294"/>
        <end position="314"/>
    </location>
</feature>
<feature type="topological domain" description="Cytoplasmic" evidence="1">
    <location>
        <begin position="315"/>
        <end position="375"/>
    </location>
</feature>
<feature type="transmembrane region" description="Helical; Name=7" evidence="2">
    <location>
        <begin position="376"/>
        <end position="396"/>
    </location>
</feature>
<feature type="topological domain" description="Extracellular" evidence="1">
    <location>
        <position position="397"/>
    </location>
</feature>
<comment type="function">
    <text evidence="1">Probable gustatory receptor which mediates acceptance or avoidance behavior, depending on its substrates.</text>
</comment>
<comment type="subcellular location">
    <subcellularLocation>
        <location evidence="1">Cell membrane</location>
        <topology evidence="1">Multi-pass membrane protein</topology>
    </subcellularLocation>
</comment>
<comment type="similarity">
    <text evidence="4">Belongs to the insect chemoreceptor superfamily. Gustatory receptor (GR) family. Gr22e subfamily.</text>
</comment>
<dbReference type="EMBL" id="AE014297">
    <property type="protein sequence ID" value="AAN13447.1"/>
    <property type="molecule type" value="Genomic_DNA"/>
</dbReference>
<dbReference type="RefSeq" id="NP_731426.1">
    <property type="nucleotide sequence ID" value="NM_169314.1"/>
</dbReference>
<dbReference type="FunCoup" id="Q8INM9">
    <property type="interactions" value="12"/>
</dbReference>
<dbReference type="STRING" id="7227.FBpp0081694"/>
<dbReference type="PaxDb" id="7227-FBpp0081694"/>
<dbReference type="EnsemblMetazoa" id="FBtr0082216">
    <property type="protein sequence ID" value="FBpp0081694"/>
    <property type="gene ID" value="FBgn0045473"/>
</dbReference>
<dbReference type="GeneID" id="117475"/>
<dbReference type="KEGG" id="dme:Dmel_CG31405"/>
<dbReference type="AGR" id="FB:FBgn0045473"/>
<dbReference type="CTD" id="117475"/>
<dbReference type="FlyBase" id="FBgn0045473">
    <property type="gene designation" value="Gr85a"/>
</dbReference>
<dbReference type="VEuPathDB" id="VectorBase:FBgn0045473"/>
<dbReference type="eggNOG" id="ENOG502T878">
    <property type="taxonomic scope" value="Eukaryota"/>
</dbReference>
<dbReference type="HOGENOM" id="CLU_061884_0_0_1"/>
<dbReference type="InParanoid" id="Q8INM9"/>
<dbReference type="OMA" id="MVQSDYI"/>
<dbReference type="OrthoDB" id="7836567at2759"/>
<dbReference type="PhylomeDB" id="Q8INM9"/>
<dbReference type="BioGRID-ORCS" id="117475">
    <property type="hits" value="0 hits in 1 CRISPR screen"/>
</dbReference>
<dbReference type="GenomeRNAi" id="117475"/>
<dbReference type="PRO" id="PR:Q8INM9"/>
<dbReference type="Proteomes" id="UP000000803">
    <property type="component" value="Chromosome 3R"/>
</dbReference>
<dbReference type="ExpressionAtlas" id="Q8INM9">
    <property type="expression patterns" value="baseline and differential"/>
</dbReference>
<dbReference type="GO" id="GO:0030424">
    <property type="term" value="C:axon"/>
    <property type="evidence" value="ECO:0000318"/>
    <property type="project" value="GO_Central"/>
</dbReference>
<dbReference type="GO" id="GO:0030425">
    <property type="term" value="C:dendrite"/>
    <property type="evidence" value="ECO:0000318"/>
    <property type="project" value="GO_Central"/>
</dbReference>
<dbReference type="GO" id="GO:0016020">
    <property type="term" value="C:membrane"/>
    <property type="evidence" value="ECO:0000303"/>
    <property type="project" value="UniProtKB"/>
</dbReference>
<dbReference type="GO" id="GO:0043025">
    <property type="term" value="C:neuronal cell body"/>
    <property type="evidence" value="ECO:0000318"/>
    <property type="project" value="GO_Central"/>
</dbReference>
<dbReference type="GO" id="GO:0005886">
    <property type="term" value="C:plasma membrane"/>
    <property type="evidence" value="ECO:0000250"/>
    <property type="project" value="FlyBase"/>
</dbReference>
<dbReference type="GO" id="GO:0015276">
    <property type="term" value="F:ligand-gated monoatomic ion channel activity"/>
    <property type="evidence" value="ECO:0000250"/>
    <property type="project" value="FlyBase"/>
</dbReference>
<dbReference type="GO" id="GO:0008527">
    <property type="term" value="F:taste receptor activity"/>
    <property type="evidence" value="ECO:0000303"/>
    <property type="project" value="UniProtKB"/>
</dbReference>
<dbReference type="GO" id="GO:0034220">
    <property type="term" value="P:monoatomic ion transmembrane transport"/>
    <property type="evidence" value="ECO:0000250"/>
    <property type="project" value="FlyBase"/>
</dbReference>
<dbReference type="GO" id="GO:0050909">
    <property type="term" value="P:sensory perception of taste"/>
    <property type="evidence" value="ECO:0000303"/>
    <property type="project" value="UniProtKB"/>
</dbReference>
<dbReference type="GO" id="GO:0007165">
    <property type="term" value="P:signal transduction"/>
    <property type="evidence" value="ECO:0007669"/>
    <property type="project" value="UniProtKB-KW"/>
</dbReference>
<dbReference type="InterPro" id="IPR013604">
    <property type="entry name" value="7TM_chemorcpt"/>
</dbReference>
<dbReference type="Pfam" id="PF08395">
    <property type="entry name" value="7tm_7"/>
    <property type="match status" value="1"/>
</dbReference>
<proteinExistence type="inferred from homology"/>
<reference evidence="4" key="1">
    <citation type="journal article" date="2000" name="Science">
        <title>The genome sequence of Drosophila melanogaster.</title>
        <authorList>
            <person name="Adams M.D."/>
            <person name="Celniker S.E."/>
            <person name="Holt R.A."/>
            <person name="Evans C.A."/>
            <person name="Gocayne J.D."/>
            <person name="Amanatides P.G."/>
            <person name="Scherer S.E."/>
            <person name="Li P.W."/>
            <person name="Hoskins R.A."/>
            <person name="Galle R.F."/>
            <person name="George R.A."/>
            <person name="Lewis S.E."/>
            <person name="Richards S."/>
            <person name="Ashburner M."/>
            <person name="Henderson S.N."/>
            <person name="Sutton G.G."/>
            <person name="Wortman J.R."/>
            <person name="Yandell M.D."/>
            <person name="Zhang Q."/>
            <person name="Chen L.X."/>
            <person name="Brandon R.C."/>
            <person name="Rogers Y.-H.C."/>
            <person name="Blazej R.G."/>
            <person name="Champe M."/>
            <person name="Pfeiffer B.D."/>
            <person name="Wan K.H."/>
            <person name="Doyle C."/>
            <person name="Baxter E.G."/>
            <person name="Helt G."/>
            <person name="Nelson C.R."/>
            <person name="Miklos G.L.G."/>
            <person name="Abril J.F."/>
            <person name="Agbayani A."/>
            <person name="An H.-J."/>
            <person name="Andrews-Pfannkoch C."/>
            <person name="Baldwin D."/>
            <person name="Ballew R.M."/>
            <person name="Basu A."/>
            <person name="Baxendale J."/>
            <person name="Bayraktaroglu L."/>
            <person name="Beasley E.M."/>
            <person name="Beeson K.Y."/>
            <person name="Benos P.V."/>
            <person name="Berman B.P."/>
            <person name="Bhandari D."/>
            <person name="Bolshakov S."/>
            <person name="Borkova D."/>
            <person name="Botchan M.R."/>
            <person name="Bouck J."/>
            <person name="Brokstein P."/>
            <person name="Brottier P."/>
            <person name="Burtis K.C."/>
            <person name="Busam D.A."/>
            <person name="Butler H."/>
            <person name="Cadieu E."/>
            <person name="Center A."/>
            <person name="Chandra I."/>
            <person name="Cherry J.M."/>
            <person name="Cawley S."/>
            <person name="Dahlke C."/>
            <person name="Davenport L.B."/>
            <person name="Davies P."/>
            <person name="de Pablos B."/>
            <person name="Delcher A."/>
            <person name="Deng Z."/>
            <person name="Mays A.D."/>
            <person name="Dew I."/>
            <person name="Dietz S.M."/>
            <person name="Dodson K."/>
            <person name="Doup L.E."/>
            <person name="Downes M."/>
            <person name="Dugan-Rocha S."/>
            <person name="Dunkov B.C."/>
            <person name="Dunn P."/>
            <person name="Durbin K.J."/>
            <person name="Evangelista C.C."/>
            <person name="Ferraz C."/>
            <person name="Ferriera S."/>
            <person name="Fleischmann W."/>
            <person name="Fosler C."/>
            <person name="Gabrielian A.E."/>
            <person name="Garg N.S."/>
            <person name="Gelbart W.M."/>
            <person name="Glasser K."/>
            <person name="Glodek A."/>
            <person name="Gong F."/>
            <person name="Gorrell J.H."/>
            <person name="Gu Z."/>
            <person name="Guan P."/>
            <person name="Harris M."/>
            <person name="Harris N.L."/>
            <person name="Harvey D.A."/>
            <person name="Heiman T.J."/>
            <person name="Hernandez J.R."/>
            <person name="Houck J."/>
            <person name="Hostin D."/>
            <person name="Houston K.A."/>
            <person name="Howland T.J."/>
            <person name="Wei M.-H."/>
            <person name="Ibegwam C."/>
            <person name="Jalali M."/>
            <person name="Kalush F."/>
            <person name="Karpen G.H."/>
            <person name="Ke Z."/>
            <person name="Kennison J.A."/>
            <person name="Ketchum K.A."/>
            <person name="Kimmel B.E."/>
            <person name="Kodira C.D."/>
            <person name="Kraft C.L."/>
            <person name="Kravitz S."/>
            <person name="Kulp D."/>
            <person name="Lai Z."/>
            <person name="Lasko P."/>
            <person name="Lei Y."/>
            <person name="Levitsky A.A."/>
            <person name="Li J.H."/>
            <person name="Li Z."/>
            <person name="Liang Y."/>
            <person name="Lin X."/>
            <person name="Liu X."/>
            <person name="Mattei B."/>
            <person name="McIntosh T.C."/>
            <person name="McLeod M.P."/>
            <person name="McPherson D."/>
            <person name="Merkulov G."/>
            <person name="Milshina N.V."/>
            <person name="Mobarry C."/>
            <person name="Morris J."/>
            <person name="Moshrefi A."/>
            <person name="Mount S.M."/>
            <person name="Moy M."/>
            <person name="Murphy B."/>
            <person name="Murphy L."/>
            <person name="Muzny D.M."/>
            <person name="Nelson D.L."/>
            <person name="Nelson D.R."/>
            <person name="Nelson K.A."/>
            <person name="Nixon K."/>
            <person name="Nusskern D.R."/>
            <person name="Pacleb J.M."/>
            <person name="Palazzolo M."/>
            <person name="Pittman G.S."/>
            <person name="Pan S."/>
            <person name="Pollard J."/>
            <person name="Puri V."/>
            <person name="Reese M.G."/>
            <person name="Reinert K."/>
            <person name="Remington K."/>
            <person name="Saunders R.D.C."/>
            <person name="Scheeler F."/>
            <person name="Shen H."/>
            <person name="Shue B.C."/>
            <person name="Siden-Kiamos I."/>
            <person name="Simpson M."/>
            <person name="Skupski M.P."/>
            <person name="Smith T.J."/>
            <person name="Spier E."/>
            <person name="Spradling A.C."/>
            <person name="Stapleton M."/>
            <person name="Strong R."/>
            <person name="Sun E."/>
            <person name="Svirskas R."/>
            <person name="Tector C."/>
            <person name="Turner R."/>
            <person name="Venter E."/>
            <person name="Wang A.H."/>
            <person name="Wang X."/>
            <person name="Wang Z.-Y."/>
            <person name="Wassarman D.A."/>
            <person name="Weinstock G.M."/>
            <person name="Weissenbach J."/>
            <person name="Williams S.M."/>
            <person name="Woodage T."/>
            <person name="Worley K.C."/>
            <person name="Wu D."/>
            <person name="Yang S."/>
            <person name="Yao Q.A."/>
            <person name="Ye J."/>
            <person name="Yeh R.-F."/>
            <person name="Zaveri J.S."/>
            <person name="Zhan M."/>
            <person name="Zhang G."/>
            <person name="Zhao Q."/>
            <person name="Zheng L."/>
            <person name="Zheng X.H."/>
            <person name="Zhong F.N."/>
            <person name="Zhong W."/>
            <person name="Zhou X."/>
            <person name="Zhu S.C."/>
            <person name="Zhu X."/>
            <person name="Smith H.O."/>
            <person name="Gibbs R.A."/>
            <person name="Myers E.W."/>
            <person name="Rubin G.M."/>
            <person name="Venter J.C."/>
        </authorList>
    </citation>
    <scope>NUCLEOTIDE SEQUENCE [LARGE SCALE GENOMIC DNA]</scope>
    <source>
        <strain evidence="3">Berkeley</strain>
    </source>
</reference>
<reference evidence="4" key="2">
    <citation type="journal article" date="2002" name="Genome Biol.">
        <title>Annotation of the Drosophila melanogaster euchromatic genome: a systematic review.</title>
        <authorList>
            <person name="Misra S."/>
            <person name="Crosby M.A."/>
            <person name="Mungall C.J."/>
            <person name="Matthews B.B."/>
            <person name="Campbell K.S."/>
            <person name="Hradecky P."/>
            <person name="Huang Y."/>
            <person name="Kaminker J.S."/>
            <person name="Millburn G.H."/>
            <person name="Prochnik S.E."/>
            <person name="Smith C.D."/>
            <person name="Tupy J.L."/>
            <person name="Whitfield E.J."/>
            <person name="Bayraktaroglu L."/>
            <person name="Berman B.P."/>
            <person name="Bettencourt B.R."/>
            <person name="Celniker S.E."/>
            <person name="de Grey A.D.N.J."/>
            <person name="Drysdale R.A."/>
            <person name="Harris N.L."/>
            <person name="Richter J."/>
            <person name="Russo S."/>
            <person name="Schroeder A.J."/>
            <person name="Shu S.Q."/>
            <person name="Stapleton M."/>
            <person name="Yamada C."/>
            <person name="Ashburner M."/>
            <person name="Gelbart W.M."/>
            <person name="Rubin G.M."/>
            <person name="Lewis S.E."/>
        </authorList>
    </citation>
    <scope>GENOME REANNOTATION</scope>
    <source>
        <strain>Berkeley</strain>
    </source>
</reference>
<reference evidence="4" key="3">
    <citation type="journal article" date="2001" name="Curr. Biol.">
        <title>Spatially restricted expression of candidate taste receptors in the Drosophila gustatory system.</title>
        <authorList>
            <person name="Dunipace L."/>
            <person name="Meister S."/>
            <person name="McNealy C."/>
            <person name="Amrein H."/>
        </authorList>
    </citation>
    <scope>IDENTIFICATION</scope>
</reference>
<organism evidence="5">
    <name type="scientific">Drosophila melanogaster</name>
    <name type="common">Fruit fly</name>
    <dbReference type="NCBI Taxonomy" id="7227"/>
    <lineage>
        <taxon>Eukaryota</taxon>
        <taxon>Metazoa</taxon>
        <taxon>Ecdysozoa</taxon>
        <taxon>Arthropoda</taxon>
        <taxon>Hexapoda</taxon>
        <taxon>Insecta</taxon>
        <taxon>Pterygota</taxon>
        <taxon>Neoptera</taxon>
        <taxon>Endopterygota</taxon>
        <taxon>Diptera</taxon>
        <taxon>Brachycera</taxon>
        <taxon>Muscomorpha</taxon>
        <taxon>Ephydroidea</taxon>
        <taxon>Drosophilidae</taxon>
        <taxon>Drosophila</taxon>
        <taxon>Sophophora</taxon>
    </lineage>
</organism>
<gene>
    <name type="primary">Gr85a</name>
    <name type="ORF">CG31405</name>
</gene>
<keyword id="KW-1003">Cell membrane</keyword>
<keyword id="KW-0472">Membrane</keyword>
<keyword id="KW-0675">Receptor</keyword>
<keyword id="KW-1185">Reference proteome</keyword>
<keyword id="KW-0807">Transducer</keyword>
<keyword id="KW-0812">Transmembrane</keyword>
<keyword id="KW-1133">Transmembrane helix</keyword>